<name>REP_MSVPA</name>
<protein>
    <recommendedName>
        <fullName>Replication-associated protein</fullName>
        <shortName>Rep</shortName>
        <ecNumber>2.7.7.-</ecNumber>
        <ecNumber>3.1.21.-</ecNumber>
    </recommendedName>
</protein>
<feature type="chain" id="PRO_0000316938" description="Replication-associated protein">
    <location>
        <begin position="1"/>
        <end position="354"/>
    </location>
</feature>
<feature type="domain" description="CRESS-DNA virus Rep endonuclease" evidence="3">
    <location>
        <begin position="11"/>
        <end position="114"/>
    </location>
</feature>
<feature type="region of interest" description="Oligomerization" evidence="1">
    <location>
        <begin position="174"/>
        <end position="186"/>
    </location>
</feature>
<feature type="region of interest" description="Transactivation" evidence="1">
    <location>
        <begin position="251"/>
        <end position="269"/>
    </location>
</feature>
<feature type="short sequence motif" description="RCR-1" evidence="3">
    <location>
        <begin position="18"/>
        <end position="21"/>
    </location>
</feature>
<feature type="short sequence motif" description="RCR-2" evidence="3">
    <location>
        <begin position="60"/>
        <end position="62"/>
    </location>
</feature>
<feature type="short sequence motif" description="RCR-3" evidence="3">
    <location>
        <begin position="100"/>
        <end position="103"/>
    </location>
</feature>
<feature type="short sequence motif" description="Nuclear localization signal" evidence="2">
    <location>
        <begin position="291"/>
        <end position="302"/>
    </location>
</feature>
<feature type="active site" description="For DNA cleavage activity" evidence="3">
    <location>
        <position position="100"/>
    </location>
</feature>
<feature type="binding site" evidence="3">
    <location>
        <position position="52"/>
    </location>
    <ligand>
        <name>a divalent metal cation</name>
        <dbReference type="ChEBI" id="CHEBI:60240"/>
    </ligand>
</feature>
<feature type="binding site" evidence="3">
    <location>
        <position position="60"/>
    </location>
    <ligand>
        <name>a divalent metal cation</name>
        <dbReference type="ChEBI" id="CHEBI:60240"/>
    </ligand>
</feature>
<feature type="binding site" evidence="3">
    <location>
        <position position="62"/>
    </location>
    <ligand>
        <name>a divalent metal cation</name>
        <dbReference type="ChEBI" id="CHEBI:60240"/>
    </ligand>
</feature>
<feature type="binding site" evidence="3">
    <location>
        <position position="104"/>
    </location>
    <ligand>
        <name>a divalent metal cation</name>
        <dbReference type="ChEBI" id="CHEBI:60240"/>
    </ligand>
</feature>
<feature type="binding site" evidence="2">
    <location>
        <begin position="228"/>
        <end position="235"/>
    </location>
    <ligand>
        <name>ATP</name>
        <dbReference type="ChEBI" id="CHEBI:30616"/>
    </ligand>
</feature>
<keyword id="KW-0025">Alternative splicing</keyword>
<keyword id="KW-0067">ATP-binding</keyword>
<keyword id="KW-0190">Covalent protein-DNA linkage</keyword>
<keyword id="KW-0235">DNA replication</keyword>
<keyword id="KW-0238">DNA-binding</keyword>
<keyword id="KW-0255">Endonuclease</keyword>
<keyword id="KW-0347">Helicase</keyword>
<keyword id="KW-1048">Host nucleus</keyword>
<keyword id="KW-0378">Hydrolase</keyword>
<keyword id="KW-0479">Metal-binding</keyword>
<keyword id="KW-0511">Multifunctional enzyme</keyword>
<keyword id="KW-0540">Nuclease</keyword>
<keyword id="KW-0547">Nucleotide-binding</keyword>
<keyword id="KW-0548">Nucleotidyltransferase</keyword>
<keyword id="KW-0678">Repressor</keyword>
<keyword id="KW-0808">Transferase</keyword>
<organismHost>
    <name type="scientific">Avena sativa</name>
    <name type="common">Oat</name>
    <dbReference type="NCBI Taxonomy" id="4498"/>
</organismHost>
<organismHost>
    <name type="scientific">Axonopus compressus</name>
    <dbReference type="NCBI Taxonomy" id="217170"/>
</organismHost>
<organismHost>
    <name type="scientific">Cenchrus americanus</name>
    <name type="common">Pearl millet</name>
    <name type="synonym">Pennisetum glaucum</name>
    <dbReference type="NCBI Taxonomy" id="4543"/>
</organismHost>
<organismHost>
    <name type="scientific">Cenchrus polystachios</name>
    <dbReference type="NCBI Taxonomy" id="281129"/>
</organismHost>
<organismHost>
    <name type="scientific">Coix lacryma-jobi</name>
    <name type="common">Job's tears</name>
    <dbReference type="NCBI Taxonomy" id="4505"/>
</organismHost>
<organismHost>
    <name type="scientific">Dactyloctenium aegyptium</name>
    <dbReference type="NCBI Taxonomy" id="270102"/>
</organismHost>
<organismHost>
    <name type="scientific">Digitaria</name>
    <dbReference type="NCBI Taxonomy" id="66017"/>
</organismHost>
<organismHost>
    <name type="scientific">Echinochloa colona</name>
    <dbReference type="NCBI Taxonomy" id="90396"/>
</organismHost>
<organismHost>
    <name type="scientific">Eleusine coracana</name>
    <name type="common">Indian finger millet</name>
    <name type="synonym">Ragi</name>
    <dbReference type="NCBI Taxonomy" id="4511"/>
</organismHost>
<organismHost>
    <name type="scientific">Eleusine indica</name>
    <name type="common">Goosegrass</name>
    <name type="synonym">Cynosurus indicus</name>
    <dbReference type="NCBI Taxonomy" id="29674"/>
</organismHost>
<organismHost>
    <name type="scientific">Hordeum vulgare</name>
    <name type="common">Barley</name>
    <dbReference type="NCBI Taxonomy" id="4513"/>
</organismHost>
<organismHost>
    <name type="scientific">Megathyrsus maximus</name>
    <dbReference type="NCBI Taxonomy" id="59788"/>
</organismHost>
<organismHost>
    <name type="scientific">Melinis repens</name>
    <name type="common">Red Natal grass</name>
    <name type="synonym">Rhynchelytrum repens</name>
    <dbReference type="NCBI Taxonomy" id="29709"/>
</organismHost>
<organismHost>
    <name type="scientific">Oryza glaberrima</name>
    <name type="common">African rice</name>
    <dbReference type="NCBI Taxonomy" id="4538"/>
</organismHost>
<organismHost>
    <name type="scientific">Oryza sativa</name>
    <name type="common">Rice</name>
    <dbReference type="NCBI Taxonomy" id="4530"/>
</organismHost>
<organismHost>
    <name type="scientific">Paspalum conjugatum</name>
    <name type="common">Hilo grass</name>
    <dbReference type="NCBI Taxonomy" id="158143"/>
</organismHost>
<organismHost>
    <name type="scientific">Paspalum notatum</name>
    <name type="common">Bahia grass</name>
    <dbReference type="NCBI Taxonomy" id="147272"/>
</organismHost>
<organismHost>
    <name type="scientific">Paspalum scrobiculatum</name>
    <dbReference type="NCBI Taxonomy" id="173849"/>
</organismHost>
<organismHost>
    <name type="scientific">Rottboellia cochinchinensis</name>
    <dbReference type="NCBI Taxonomy" id="300125"/>
</organismHost>
<organismHost>
    <name type="scientific">Saccharum officinarum</name>
    <name type="common">Sugarcane</name>
    <dbReference type="NCBI Taxonomy" id="4547"/>
</organismHost>
<organismHost>
    <name type="scientific">Setaria barbata</name>
    <dbReference type="NCBI Taxonomy" id="192628"/>
</organismHost>
<organismHost>
    <name type="scientific">Triticum aestivum</name>
    <name type="common">Wheat</name>
    <dbReference type="NCBI Taxonomy" id="4565"/>
</organismHost>
<organismHost>
    <name type="scientific">Urochloa deflexa</name>
    <dbReference type="NCBI Taxonomy" id="240436"/>
</organismHost>
<organismHost>
    <name type="scientific">Zea mays</name>
    <name type="common">Maize</name>
    <dbReference type="NCBI Taxonomy" id="4577"/>
</organismHost>
<accession>Q91MG2</accession>
<evidence type="ECO:0000250" key="1"/>
<evidence type="ECO:0000255" key="2"/>
<evidence type="ECO:0000255" key="3">
    <source>
        <dbReference type="PROSITE-ProRule" id="PRU01364"/>
    </source>
</evidence>
<evidence type="ECO:0000305" key="4"/>
<dbReference type="EC" id="2.7.7.-"/>
<dbReference type="EC" id="3.1.21.-"/>
<dbReference type="EMBL" id="AF329888">
    <property type="protein sequence ID" value="AAK73470.1"/>
    <property type="molecule type" value="Genomic_DNA"/>
</dbReference>
<dbReference type="SMR" id="Q91MG2"/>
<dbReference type="Proteomes" id="UP000007780">
    <property type="component" value="Genome"/>
</dbReference>
<dbReference type="GO" id="GO:0042025">
    <property type="term" value="C:host cell nucleus"/>
    <property type="evidence" value="ECO:0007669"/>
    <property type="project" value="UniProtKB-SubCell"/>
</dbReference>
<dbReference type="GO" id="GO:0005524">
    <property type="term" value="F:ATP binding"/>
    <property type="evidence" value="ECO:0007669"/>
    <property type="project" value="UniProtKB-KW"/>
</dbReference>
<dbReference type="GO" id="GO:0003677">
    <property type="term" value="F:DNA binding"/>
    <property type="evidence" value="ECO:0007669"/>
    <property type="project" value="UniProtKB-KW"/>
</dbReference>
<dbReference type="GO" id="GO:0016888">
    <property type="term" value="F:endodeoxyribonuclease activity, producing 5'-phosphomonoesters"/>
    <property type="evidence" value="ECO:0007669"/>
    <property type="project" value="InterPro"/>
</dbReference>
<dbReference type="GO" id="GO:0004386">
    <property type="term" value="F:helicase activity"/>
    <property type="evidence" value="ECO:0007669"/>
    <property type="project" value="UniProtKB-KW"/>
</dbReference>
<dbReference type="GO" id="GO:0046872">
    <property type="term" value="F:metal ion binding"/>
    <property type="evidence" value="ECO:0007669"/>
    <property type="project" value="UniProtKB-KW"/>
</dbReference>
<dbReference type="GO" id="GO:0016779">
    <property type="term" value="F:nucleotidyltransferase activity"/>
    <property type="evidence" value="ECO:0007669"/>
    <property type="project" value="UniProtKB-KW"/>
</dbReference>
<dbReference type="GO" id="GO:0005198">
    <property type="term" value="F:structural molecule activity"/>
    <property type="evidence" value="ECO:0007669"/>
    <property type="project" value="InterPro"/>
</dbReference>
<dbReference type="GO" id="GO:0006260">
    <property type="term" value="P:DNA replication"/>
    <property type="evidence" value="ECO:0007669"/>
    <property type="project" value="UniProtKB-KW"/>
</dbReference>
<dbReference type="Gene3D" id="3.40.1310.20">
    <property type="match status" value="1"/>
</dbReference>
<dbReference type="Gene3D" id="3.40.50.300">
    <property type="entry name" value="P-loop containing nucleotide triphosphate hydrolases"/>
    <property type="match status" value="1"/>
</dbReference>
<dbReference type="InterPro" id="IPR049912">
    <property type="entry name" value="CRESS_DNA_REP"/>
</dbReference>
<dbReference type="InterPro" id="IPR001146">
    <property type="entry name" value="Gemini_AL1_MSV"/>
</dbReference>
<dbReference type="InterPro" id="IPR001191">
    <property type="entry name" value="Gemini_AL1_REP"/>
</dbReference>
<dbReference type="InterPro" id="IPR022692">
    <property type="entry name" value="Gemini_AL1_REP_central"/>
</dbReference>
<dbReference type="InterPro" id="IPR027417">
    <property type="entry name" value="P-loop_NTPase"/>
</dbReference>
<dbReference type="Pfam" id="PF00799">
    <property type="entry name" value="Gemini_AL1"/>
    <property type="match status" value="1"/>
</dbReference>
<dbReference type="Pfam" id="PF08283">
    <property type="entry name" value="Gemini_AL1_M"/>
    <property type="match status" value="1"/>
</dbReference>
<dbReference type="PRINTS" id="PR00227">
    <property type="entry name" value="GEMCOATAL1"/>
</dbReference>
<dbReference type="PRINTS" id="PR00229">
    <property type="entry name" value="GEMCOATMSVL1"/>
</dbReference>
<dbReference type="SUPFAM" id="SSF55464">
    <property type="entry name" value="Origin of replication-binding domain, RBD-like"/>
    <property type="match status" value="1"/>
</dbReference>
<dbReference type="SUPFAM" id="SSF52540">
    <property type="entry name" value="P-loop containing nucleoside triphosphate hydrolases"/>
    <property type="match status" value="1"/>
</dbReference>
<dbReference type="PROSITE" id="PS52020">
    <property type="entry name" value="CRESS_DNA_REP"/>
    <property type="match status" value="1"/>
</dbReference>
<proteinExistence type="inferred from homology"/>
<gene>
    <name type="ORF">C1/C2</name>
</gene>
<reference key="1">
    <citation type="journal article" date="2001" name="Virology">
        <title>Sequence diversity and virulence in Zea mays of Maize streak virus isolates.</title>
        <authorList>
            <person name="Martin D.P."/>
            <person name="Willment J.A."/>
            <person name="Billharz R."/>
            <person name="Velders R."/>
            <person name="Odhiambo B."/>
            <person name="Njuguna J."/>
            <person name="James D."/>
            <person name="Rybicki E.P."/>
        </authorList>
    </citation>
    <scope>NUCLEOTIDE SEQUENCE [GENOMIC DNA]</scope>
</reference>
<organism>
    <name type="scientific">Maize streak virus genotype E (isolate Pat)</name>
    <name type="common">MSV</name>
    <dbReference type="NCBI Taxonomy" id="268331"/>
    <lineage>
        <taxon>Viruses</taxon>
        <taxon>Monodnaviria</taxon>
        <taxon>Shotokuvirae</taxon>
        <taxon>Cressdnaviricota</taxon>
        <taxon>Repensiviricetes</taxon>
        <taxon>Geplafuvirales</taxon>
        <taxon>Geminiviridae</taxon>
        <taxon>Mastrevirus</taxon>
        <taxon>Maize streak virus</taxon>
    </lineage>
</organism>
<comment type="function">
    <text evidence="1">Essential for the replication of viral ssDNA. The closed circular ssDNA genome is first converted to a superhelical dsDNA. Rep binds a specific region at the genome origin of replication. It introduces an endonucleolytic nick within the conserved sequence 5'-TAATATTAC-3' in the intergenic region of the genome present in all geminiviruses, thereby initiating the rolling circle replication (RCR). Following cleavage, binds covalently to the 5'-phosphate of DNA as a tyrosyl ester. The cleavage gives rise to a free 3'-OH that serves as a primer for the cellular DNA polymerase. The polymerase synthesizes the (+) strand DNA by rolling circle mechanism. After one round of replication, a Rep-catalyzed nucleotidyl transfer reaction releases a circular single-stranded virus genome, thereby terminating the replication. Displays origin-specific DNA cleavage, nucleotidyl transferase, ATPase and helicase activities. Acts as an inhibitor of C-sense gene transcription (By similarity).</text>
</comment>
<comment type="cofactor">
    <cofactor evidence="3">
        <name>Mg(2+)</name>
        <dbReference type="ChEBI" id="CHEBI:18420"/>
    </cofactor>
    <cofactor evidence="3">
        <name>Mn(2+)</name>
        <dbReference type="ChEBI" id="CHEBI:29035"/>
    </cofactor>
    <text evidence="3">Divalent metal cations, possibly Mg(2+) or Mn(2+).</text>
</comment>
<comment type="subunit">
    <text>Homooligomer. Rep binds to repeated DNA motifs (iterons). Forms the O-complex, which is a Rep-DNA complex involved in the initiation of RCR. Part of the C- and V-complexes which are RepA-Rep-DNA complexes involved in the c-sense and v-sense transcription.</text>
</comment>
<comment type="subcellular location">
    <subcellularLocation>
        <location evidence="1">Host nucleus</location>
    </subcellularLocation>
</comment>
<comment type="alternative products">
    <event type="alternative splicing"/>
    <isoform>
        <id>Q91MG2-1</id>
        <name>Rep</name>
        <sequence type="displayed"/>
    </isoform>
    <isoform>
        <id>Q91MG1-1</id>
        <name>RepA</name>
        <sequence type="external"/>
    </isoform>
</comment>
<comment type="domain">
    <text>There are 3 rolling circle replication (RCR) motifs. RCR-2 is probably involved in metal coordination. RCR-3 is required for phosphodiester bond cleavage for initiation of RCR.</text>
</comment>
<comment type="similarity">
    <text evidence="4">Belongs to the geminiviridae Rep protein family.</text>
</comment>
<sequence length="354" mass="41135">MASSSSNRSFLHRNANTFLTYPHCPENPEIISQKLWDLVARWNPLYIVCAREAHRDGNMHLHALLQTDKPVRTTDARIFDIEGFHPNIQSAKSVNKVRDYILKEPLAVFERGTFIPRKSCFQGNTPPFPKKNPNKDEIMAHIISHATSKQEYLCLVRKEFPYDWATKLQYFEYSANKLFPDIQEEFISPHPPSSPDLLCNESIKDWLQPNIYQPADEGSRKQSLYIVGPTRTGKSTWARSLGLHNYWQNNVDWSSYNEDAIYNIVDDIPFKYCPCWKQLVGCQKEFVVNPKYGKKKKVQMKSKPTIILANSDEDWMKEMTPGQLEYFEANCMIYVMSPGEKWYSPPQLPPTEEV</sequence>